<keyword id="KW-1185">Reference proteome</keyword>
<keyword id="KW-0687">Ribonucleoprotein</keyword>
<keyword id="KW-0689">Ribosomal protein</keyword>
<reference key="1">
    <citation type="journal article" date="2008" name="Appl. Environ. Microbiol.">
        <title>The genome sequence of the metal-mobilizing, extremely thermoacidophilic archaeon Metallosphaera sedula provides insights into bioleaching-associated metabolism.</title>
        <authorList>
            <person name="Auernik K.S."/>
            <person name="Maezato Y."/>
            <person name="Blum P.H."/>
            <person name="Kelly R.M."/>
        </authorList>
    </citation>
    <scope>NUCLEOTIDE SEQUENCE [LARGE SCALE GENOMIC DNA]</scope>
    <source>
        <strain>ATCC 51363 / DSM 5348 / JCM 9185 / NBRC 15509 / TH2</strain>
    </source>
</reference>
<organism>
    <name type="scientific">Metallosphaera sedula (strain ATCC 51363 / DSM 5348 / JCM 9185 / NBRC 15509 / TH2)</name>
    <dbReference type="NCBI Taxonomy" id="399549"/>
    <lineage>
        <taxon>Archaea</taxon>
        <taxon>Thermoproteota</taxon>
        <taxon>Thermoprotei</taxon>
        <taxon>Sulfolobales</taxon>
        <taxon>Sulfolobaceae</taxon>
        <taxon>Metallosphaera</taxon>
    </lineage>
</organism>
<sequence length="80" mass="9106">MSEKQQSSSIIEEFGFPAEVIQLLDRTGVTGEVTQVRVRVLEGRDKGRILTRNIKGPVRLGDIVILRETEREARKLTTKR</sequence>
<accession>A4YCQ2</accession>
<evidence type="ECO:0000255" key="1">
    <source>
        <dbReference type="HAMAP-Rule" id="MF_00292"/>
    </source>
</evidence>
<evidence type="ECO:0000305" key="2"/>
<dbReference type="EMBL" id="CP000682">
    <property type="protein sequence ID" value="ABP94204.1"/>
    <property type="molecule type" value="Genomic_DNA"/>
</dbReference>
<dbReference type="RefSeq" id="WP_011921173.1">
    <property type="nucleotide sequence ID" value="NC_009440.1"/>
</dbReference>
<dbReference type="SMR" id="A4YCQ2"/>
<dbReference type="STRING" id="399549.Msed_0027"/>
<dbReference type="GeneID" id="91756877"/>
<dbReference type="KEGG" id="mse:Msed_0027"/>
<dbReference type="eggNOG" id="arCOG04314">
    <property type="taxonomic scope" value="Archaea"/>
</dbReference>
<dbReference type="HOGENOM" id="CLU_178987_2_0_2"/>
<dbReference type="Proteomes" id="UP000000242">
    <property type="component" value="Chromosome"/>
</dbReference>
<dbReference type="GO" id="GO:0022627">
    <property type="term" value="C:cytosolic small ribosomal subunit"/>
    <property type="evidence" value="ECO:0007669"/>
    <property type="project" value="TreeGrafter"/>
</dbReference>
<dbReference type="GO" id="GO:0003735">
    <property type="term" value="F:structural constituent of ribosome"/>
    <property type="evidence" value="ECO:0007669"/>
    <property type="project" value="InterPro"/>
</dbReference>
<dbReference type="GO" id="GO:0030490">
    <property type="term" value="P:maturation of SSU-rRNA"/>
    <property type="evidence" value="ECO:0007669"/>
    <property type="project" value="TreeGrafter"/>
</dbReference>
<dbReference type="GO" id="GO:0000028">
    <property type="term" value="P:ribosomal small subunit assembly"/>
    <property type="evidence" value="ECO:0007669"/>
    <property type="project" value="TreeGrafter"/>
</dbReference>
<dbReference type="GO" id="GO:0006412">
    <property type="term" value="P:translation"/>
    <property type="evidence" value="ECO:0007669"/>
    <property type="project" value="UniProtKB-UniRule"/>
</dbReference>
<dbReference type="CDD" id="cd04457">
    <property type="entry name" value="S1_S28E"/>
    <property type="match status" value="1"/>
</dbReference>
<dbReference type="FunFam" id="2.40.50.140:FF:000145">
    <property type="entry name" value="30S ribosomal protein S28e"/>
    <property type="match status" value="1"/>
</dbReference>
<dbReference type="Gene3D" id="2.40.50.140">
    <property type="entry name" value="Nucleic acid-binding proteins"/>
    <property type="match status" value="1"/>
</dbReference>
<dbReference type="HAMAP" id="MF_00292">
    <property type="entry name" value="Ribosomal_eS28"/>
    <property type="match status" value="1"/>
</dbReference>
<dbReference type="InterPro" id="IPR012340">
    <property type="entry name" value="NA-bd_OB-fold"/>
</dbReference>
<dbReference type="InterPro" id="IPR000289">
    <property type="entry name" value="Ribosomal_eS28"/>
</dbReference>
<dbReference type="InterPro" id="IPR028626">
    <property type="entry name" value="Ribosomal_eS28_CS"/>
</dbReference>
<dbReference type="NCBIfam" id="NF003080">
    <property type="entry name" value="PRK04007.1"/>
    <property type="match status" value="1"/>
</dbReference>
<dbReference type="PANTHER" id="PTHR10769">
    <property type="entry name" value="40S RIBOSOMAL PROTEIN S28"/>
    <property type="match status" value="1"/>
</dbReference>
<dbReference type="PANTHER" id="PTHR10769:SF3">
    <property type="entry name" value="SMALL RIBOSOMAL SUBUNIT PROTEIN ES28"/>
    <property type="match status" value="1"/>
</dbReference>
<dbReference type="Pfam" id="PF01200">
    <property type="entry name" value="Ribosomal_S28e"/>
    <property type="match status" value="1"/>
</dbReference>
<dbReference type="SUPFAM" id="SSF50249">
    <property type="entry name" value="Nucleic acid-binding proteins"/>
    <property type="match status" value="1"/>
</dbReference>
<dbReference type="PROSITE" id="PS00961">
    <property type="entry name" value="RIBOSOMAL_S28E"/>
    <property type="match status" value="1"/>
</dbReference>
<feature type="chain" id="PRO_1000071953" description="Small ribosomal subunit protein eS28">
    <location>
        <begin position="1"/>
        <end position="80"/>
    </location>
</feature>
<protein>
    <recommendedName>
        <fullName evidence="1">Small ribosomal subunit protein eS28</fullName>
    </recommendedName>
    <alternativeName>
        <fullName evidence="2">30S ribosomal protein S28e</fullName>
    </alternativeName>
</protein>
<name>RS28_METS5</name>
<proteinExistence type="inferred from homology"/>
<comment type="similarity">
    <text evidence="1">Belongs to the eukaryotic ribosomal protein eS28 family.</text>
</comment>
<gene>
    <name evidence="1" type="primary">rps28e</name>
    <name type="ordered locus">Msed_0027</name>
</gene>